<comment type="function">
    <text evidence="1">GTPase that recruits MYO1E to MHC class II-containing vesicles via the effector protein ARL14EP and hence controls the movement of these vesicles along the actin cytoskeleton in dendritic cells.</text>
</comment>
<comment type="subunit">
    <text evidence="1">Interacts with ARL14EP.</text>
</comment>
<comment type="subcellular location">
    <subcellularLocation>
        <location>Cytoplasmic vesicle</location>
    </subcellularLocation>
    <text evidence="1">Colocalizes with MHC II-containing cytoplasmic vesicles.</text>
</comment>
<comment type="similarity">
    <text evidence="3">Belongs to the small GTPase superfamily. Arf family.</text>
</comment>
<dbReference type="EMBL" id="BC104368">
    <property type="protein sequence ID" value="AAI04369.1"/>
    <property type="molecule type" value="mRNA"/>
</dbReference>
<dbReference type="EMBL" id="BC104369">
    <property type="protein sequence ID" value="AAI04370.1"/>
    <property type="molecule type" value="mRNA"/>
</dbReference>
<dbReference type="CCDS" id="CCDS59645.1"/>
<dbReference type="SMR" id="Q3SXC5"/>
<dbReference type="FunCoup" id="Q3SXC5">
    <property type="interactions" value="231"/>
</dbReference>
<dbReference type="STRING" id="10090.ENSMUSP00000138370"/>
<dbReference type="PhosphoSitePlus" id="Q3SXC5"/>
<dbReference type="PaxDb" id="10090-ENSMUSP00000138370"/>
<dbReference type="ProteomicsDB" id="283221"/>
<dbReference type="AGR" id="MGI:1918869"/>
<dbReference type="MGI" id="MGI:1918869">
    <property type="gene designation" value="Arl14"/>
</dbReference>
<dbReference type="eggNOG" id="KOG0070">
    <property type="taxonomic scope" value="Eukaryota"/>
</dbReference>
<dbReference type="InParanoid" id="Q3SXC5"/>
<dbReference type="PhylomeDB" id="Q3SXC5"/>
<dbReference type="PRO" id="PR:Q3SXC5"/>
<dbReference type="Proteomes" id="UP000000589">
    <property type="component" value="Unplaced"/>
</dbReference>
<dbReference type="RNAct" id="Q3SXC5">
    <property type="molecule type" value="protein"/>
</dbReference>
<dbReference type="GO" id="GO:0031410">
    <property type="term" value="C:cytoplasmic vesicle"/>
    <property type="evidence" value="ECO:0007669"/>
    <property type="project" value="UniProtKB-KW"/>
</dbReference>
<dbReference type="GO" id="GO:0005525">
    <property type="term" value="F:GTP binding"/>
    <property type="evidence" value="ECO:0007669"/>
    <property type="project" value="UniProtKB-KW"/>
</dbReference>
<dbReference type="GO" id="GO:0003924">
    <property type="term" value="F:GTPase activity"/>
    <property type="evidence" value="ECO:0007669"/>
    <property type="project" value="InterPro"/>
</dbReference>
<dbReference type="CDD" id="cd04156">
    <property type="entry name" value="ARLTS1"/>
    <property type="match status" value="1"/>
</dbReference>
<dbReference type="FunFam" id="3.40.50.300:FF:000412">
    <property type="entry name" value="ADP-ribosylation factor 1"/>
    <property type="match status" value="1"/>
</dbReference>
<dbReference type="Gene3D" id="3.40.50.300">
    <property type="entry name" value="P-loop containing nucleotide triphosphate hydrolases"/>
    <property type="match status" value="1"/>
</dbReference>
<dbReference type="InterPro" id="IPR027417">
    <property type="entry name" value="P-loop_NTPase"/>
</dbReference>
<dbReference type="InterPro" id="IPR005225">
    <property type="entry name" value="Small_GTP-bd"/>
</dbReference>
<dbReference type="InterPro" id="IPR024156">
    <property type="entry name" value="Small_GTPase_ARF"/>
</dbReference>
<dbReference type="InterPro" id="IPR006689">
    <property type="entry name" value="Small_GTPase_ARF/SAR"/>
</dbReference>
<dbReference type="NCBIfam" id="TIGR00231">
    <property type="entry name" value="small_GTP"/>
    <property type="match status" value="1"/>
</dbReference>
<dbReference type="PANTHER" id="PTHR11711">
    <property type="entry name" value="ADP RIBOSYLATION FACTOR-RELATED"/>
    <property type="match status" value="1"/>
</dbReference>
<dbReference type="Pfam" id="PF00025">
    <property type="entry name" value="Arf"/>
    <property type="match status" value="1"/>
</dbReference>
<dbReference type="PRINTS" id="PR00328">
    <property type="entry name" value="SAR1GTPBP"/>
</dbReference>
<dbReference type="SMART" id="SM00177">
    <property type="entry name" value="ARF"/>
    <property type="match status" value="1"/>
</dbReference>
<dbReference type="SMART" id="SM00175">
    <property type="entry name" value="RAB"/>
    <property type="match status" value="1"/>
</dbReference>
<dbReference type="SMART" id="SM00178">
    <property type="entry name" value="SAR"/>
    <property type="match status" value="1"/>
</dbReference>
<dbReference type="SUPFAM" id="SSF52540">
    <property type="entry name" value="P-loop containing nucleoside triphosphate hydrolases"/>
    <property type="match status" value="1"/>
</dbReference>
<dbReference type="PROSITE" id="PS51417">
    <property type="entry name" value="ARF"/>
    <property type="match status" value="1"/>
</dbReference>
<protein>
    <recommendedName>
        <fullName>ADP-ribosylation factor-like protein 14</fullName>
    </recommendedName>
    <alternativeName>
        <fullName>ADP-ribosylation factor 7</fullName>
    </alternativeName>
</protein>
<proteinExistence type="evidence at transcript level"/>
<evidence type="ECO:0000250" key="1"/>
<evidence type="ECO:0000255" key="2"/>
<evidence type="ECO:0000305" key="3"/>
<gene>
    <name type="primary">Arl14</name>
    <name type="synonym">Arf7</name>
</gene>
<feature type="initiator methionine" description="Removed" evidence="2">
    <location>
        <position position="1"/>
    </location>
</feature>
<feature type="chain" id="PRO_0000281148" description="ADP-ribosylation factor-like protein 14">
    <location>
        <begin position="2"/>
        <end position="192"/>
    </location>
</feature>
<feature type="binding site" evidence="1">
    <location>
        <begin position="20"/>
        <end position="27"/>
    </location>
    <ligand>
        <name>GTP</name>
        <dbReference type="ChEBI" id="CHEBI:37565"/>
    </ligand>
</feature>
<feature type="binding site" evidence="1">
    <location>
        <begin position="64"/>
        <end position="68"/>
    </location>
    <ligand>
        <name>GTP</name>
        <dbReference type="ChEBI" id="CHEBI:37565"/>
    </ligand>
</feature>
<feature type="binding site" evidence="1">
    <location>
        <begin position="124"/>
        <end position="127"/>
    </location>
    <ligand>
        <name>GTP</name>
        <dbReference type="ChEBI" id="CHEBI:37565"/>
    </ligand>
</feature>
<feature type="lipid moiety-binding region" description="N-myristoyl glycine" evidence="2">
    <location>
        <position position="2"/>
    </location>
</feature>
<sequence>MGLLNSKNPQSKQAHILLLGLDSAGKSTLLYRLKFAETLATIPTIGFNVEMVQLQSSLTLTVWDVGGQEKMRTVWDCYCENAQGLMYVVDCSEGKKRLEDSRKEFKHILKNEHIKNTPVVILANKQDLPGALSAEDITRMFKVKKLCSNRNWYVQPCCAVTGEGLDDGFRKLTEFLKSYRRTRETLAIFKQK</sequence>
<organism>
    <name type="scientific">Mus musculus</name>
    <name type="common">Mouse</name>
    <dbReference type="NCBI Taxonomy" id="10090"/>
    <lineage>
        <taxon>Eukaryota</taxon>
        <taxon>Metazoa</taxon>
        <taxon>Chordata</taxon>
        <taxon>Craniata</taxon>
        <taxon>Vertebrata</taxon>
        <taxon>Euteleostomi</taxon>
        <taxon>Mammalia</taxon>
        <taxon>Eutheria</taxon>
        <taxon>Euarchontoglires</taxon>
        <taxon>Glires</taxon>
        <taxon>Rodentia</taxon>
        <taxon>Myomorpha</taxon>
        <taxon>Muroidea</taxon>
        <taxon>Muridae</taxon>
        <taxon>Murinae</taxon>
        <taxon>Mus</taxon>
        <taxon>Mus</taxon>
    </lineage>
</organism>
<name>ARL14_MOUSE</name>
<keyword id="KW-0968">Cytoplasmic vesicle</keyword>
<keyword id="KW-0342">GTP-binding</keyword>
<keyword id="KW-0449">Lipoprotein</keyword>
<keyword id="KW-0519">Myristate</keyword>
<keyword id="KW-0547">Nucleotide-binding</keyword>
<keyword id="KW-1185">Reference proteome</keyword>
<reference key="1">
    <citation type="journal article" date="2004" name="Genome Res.">
        <title>The status, quality, and expansion of the NIH full-length cDNA project: the Mammalian Gene Collection (MGC).</title>
        <authorList>
            <consortium name="The MGC Project Team"/>
        </authorList>
    </citation>
    <scope>NUCLEOTIDE SEQUENCE [LARGE SCALE MRNA]</scope>
</reference>
<accession>Q3SXC5</accession>